<feature type="chain" id="PRO_0000087379" description="Fuctinin-3">
    <location>
        <begin position="1"/>
        <end position="39" status="greater than"/>
    </location>
</feature>
<feature type="region of interest" description="Disordered" evidence="1">
    <location>
        <begin position="1"/>
        <end position="39"/>
    </location>
</feature>
<feature type="non-terminal residue">
    <location>
        <position position="39"/>
    </location>
</feature>
<keyword id="KW-0963">Cytoplasm</keyword>
<keyword id="KW-0903">Direct protein sequencing</keyword>
<keyword id="KW-1185">Reference proteome</keyword>
<accession>P80349</accession>
<protein>
    <recommendedName>
        <fullName>Fuctinin-3</fullName>
    </recommendedName>
    <alternativeName>
        <fullName>Fucosyltransferase inhibitor 3</fullName>
    </alternativeName>
</protein>
<comment type="function">
    <text>Has a role in the physiological regulation of fucosylation processes.</text>
</comment>
<comment type="subunit">
    <text>Oligomer.</text>
</comment>
<comment type="subcellular location">
    <subcellularLocation>
        <location>Cytoplasm</location>
    </subcellularLocation>
</comment>
<comment type="similarity">
    <text evidence="2">To human SET/PHAPII protein.</text>
</comment>
<proteinExistence type="evidence at protein level"/>
<name>FUC3_RAT</name>
<organism>
    <name type="scientific">Rattus norvegicus</name>
    <name type="common">Rat</name>
    <dbReference type="NCBI Taxonomy" id="10116"/>
    <lineage>
        <taxon>Eukaryota</taxon>
        <taxon>Metazoa</taxon>
        <taxon>Chordata</taxon>
        <taxon>Craniata</taxon>
        <taxon>Vertebrata</taxon>
        <taxon>Euteleostomi</taxon>
        <taxon>Mammalia</taxon>
        <taxon>Eutheria</taxon>
        <taxon>Euarchontoglires</taxon>
        <taxon>Glires</taxon>
        <taxon>Rodentia</taxon>
        <taxon>Myomorpha</taxon>
        <taxon>Muroidea</taxon>
        <taxon>Muridae</taxon>
        <taxon>Murinae</taxon>
        <taxon>Rattus</taxon>
    </lineage>
</organism>
<sequence>KELNSNHDGADETSEKEQQEAIEHIDEVQNEIDRLNETA</sequence>
<dbReference type="PIR" id="S78008">
    <property type="entry name" value="S78008"/>
</dbReference>
<dbReference type="SMR" id="P80349"/>
<dbReference type="jPOST" id="P80349"/>
<dbReference type="eggNOG" id="KOG0694">
    <property type="taxonomic scope" value="Eukaryota"/>
</dbReference>
<dbReference type="eggNOG" id="KOG1508">
    <property type="taxonomic scope" value="Eukaryota"/>
</dbReference>
<dbReference type="InParanoid" id="P80349"/>
<dbReference type="Proteomes" id="UP000002494">
    <property type="component" value="Unplaced"/>
</dbReference>
<dbReference type="GO" id="GO:0005737">
    <property type="term" value="C:cytoplasm"/>
    <property type="evidence" value="ECO:0007669"/>
    <property type="project" value="UniProtKB-SubCell"/>
</dbReference>
<dbReference type="Gene3D" id="1.20.5.1500">
    <property type="match status" value="1"/>
</dbReference>
<reference key="1">
    <citation type="journal article" date="1994" name="Eur. J. Biochem.">
        <title>Purification and partial amino acid sequence of fuctinin, an endogenous inhibitor of fucosyltransferase activities.</title>
        <authorList>
            <person name="Ruggiero-Lopez D."/>
            <person name="Manioc C."/>
            <person name="Geourjon C."/>
            <person name="Louisot P."/>
            <person name="Martin A."/>
        </authorList>
    </citation>
    <scope>PROTEIN SEQUENCE</scope>
    <source>
        <strain>Sprague-Dawley</strain>
        <tissue>Small intestine mucosa</tissue>
    </source>
</reference>
<evidence type="ECO:0000256" key="1">
    <source>
        <dbReference type="SAM" id="MobiDB-lite"/>
    </source>
</evidence>
<evidence type="ECO:0000305" key="2"/>